<protein>
    <recommendedName>
        <fullName evidence="1">Ribosome maturation factor RimM</fullName>
    </recommendedName>
</protein>
<reference key="1">
    <citation type="submission" date="2007-11" db="EMBL/GenBank/DDBJ databases">
        <title>The genome sequence of the hyperthermophilic bacterium Thermotoga neapolitana.</title>
        <authorList>
            <person name="Lim S.K."/>
            <person name="Kim J.S."/>
            <person name="Cha S.H."/>
            <person name="Park B.C."/>
            <person name="Lee D.S."/>
            <person name="Tae H.S."/>
            <person name="Kim S.-J."/>
            <person name="Kim J.J."/>
            <person name="Park K.J."/>
            <person name="Lee S.Y."/>
        </authorList>
    </citation>
    <scope>NUCLEOTIDE SEQUENCE [LARGE SCALE GENOMIC DNA]</scope>
    <source>
        <strain>ATCC 49049 / DSM 4359 / NBRC 107923 / NS-E</strain>
    </source>
</reference>
<sequence length="176" mass="20438">MIKTVQDLINERIAVGKVVNTHGLKGEVKFFPYTNSEEIVKNLSSVVLYNREKKVFYNLSVESVRRMNKLFLIKFETIDTVEAAEKIKGCEVFIKYEELPPLQNDEYYFYEILGCEVYYESGECVGKVVDIIETGSNDVLVVKKKNRETLIPMIKDCVVEIKKPEKKIVVKELEWI</sequence>
<organism>
    <name type="scientific">Thermotoga neapolitana (strain ATCC 49049 / DSM 4359 / NBRC 107923 / NS-E)</name>
    <dbReference type="NCBI Taxonomy" id="309803"/>
    <lineage>
        <taxon>Bacteria</taxon>
        <taxon>Thermotogati</taxon>
        <taxon>Thermotogota</taxon>
        <taxon>Thermotogae</taxon>
        <taxon>Thermotogales</taxon>
        <taxon>Thermotogaceae</taxon>
        <taxon>Thermotoga</taxon>
    </lineage>
</organism>
<evidence type="ECO:0000255" key="1">
    <source>
        <dbReference type="HAMAP-Rule" id="MF_00014"/>
    </source>
</evidence>
<name>RIMM_THENN</name>
<gene>
    <name evidence="1" type="primary">rimM</name>
    <name type="ordered locus">CTN_1151</name>
</gene>
<dbReference type="EMBL" id="CP000916">
    <property type="protein sequence ID" value="ACM23327.1"/>
    <property type="molecule type" value="Genomic_DNA"/>
</dbReference>
<dbReference type="RefSeq" id="WP_015919642.1">
    <property type="nucleotide sequence ID" value="NC_011978.1"/>
</dbReference>
<dbReference type="SMR" id="B9K8P4"/>
<dbReference type="STRING" id="309803.CTN_1151"/>
<dbReference type="KEGG" id="tna:CTN_1151"/>
<dbReference type="eggNOG" id="COG0806">
    <property type="taxonomic scope" value="Bacteria"/>
</dbReference>
<dbReference type="HOGENOM" id="CLU_077636_1_0_0"/>
<dbReference type="Proteomes" id="UP000000445">
    <property type="component" value="Chromosome"/>
</dbReference>
<dbReference type="GO" id="GO:0005737">
    <property type="term" value="C:cytoplasm"/>
    <property type="evidence" value="ECO:0007669"/>
    <property type="project" value="UniProtKB-SubCell"/>
</dbReference>
<dbReference type="GO" id="GO:0005840">
    <property type="term" value="C:ribosome"/>
    <property type="evidence" value="ECO:0007669"/>
    <property type="project" value="InterPro"/>
</dbReference>
<dbReference type="GO" id="GO:0043022">
    <property type="term" value="F:ribosome binding"/>
    <property type="evidence" value="ECO:0007669"/>
    <property type="project" value="InterPro"/>
</dbReference>
<dbReference type="GO" id="GO:0042274">
    <property type="term" value="P:ribosomal small subunit biogenesis"/>
    <property type="evidence" value="ECO:0007669"/>
    <property type="project" value="UniProtKB-UniRule"/>
</dbReference>
<dbReference type="GO" id="GO:0006364">
    <property type="term" value="P:rRNA processing"/>
    <property type="evidence" value="ECO:0007669"/>
    <property type="project" value="UniProtKB-UniRule"/>
</dbReference>
<dbReference type="Gene3D" id="2.30.30.240">
    <property type="entry name" value="PRC-barrel domain"/>
    <property type="match status" value="1"/>
</dbReference>
<dbReference type="Gene3D" id="2.40.30.60">
    <property type="entry name" value="RimM"/>
    <property type="match status" value="1"/>
</dbReference>
<dbReference type="HAMAP" id="MF_00014">
    <property type="entry name" value="Ribosome_mat_RimM"/>
    <property type="match status" value="1"/>
</dbReference>
<dbReference type="InterPro" id="IPR027275">
    <property type="entry name" value="PRC-brl_dom"/>
</dbReference>
<dbReference type="InterPro" id="IPR011033">
    <property type="entry name" value="PRC_barrel-like_sf"/>
</dbReference>
<dbReference type="InterPro" id="IPR011961">
    <property type="entry name" value="RimM"/>
</dbReference>
<dbReference type="InterPro" id="IPR002676">
    <property type="entry name" value="RimM_N"/>
</dbReference>
<dbReference type="InterPro" id="IPR036976">
    <property type="entry name" value="RimM_N_sf"/>
</dbReference>
<dbReference type="InterPro" id="IPR009000">
    <property type="entry name" value="Transl_B-barrel_sf"/>
</dbReference>
<dbReference type="NCBIfam" id="TIGR02273">
    <property type="entry name" value="16S_RimM"/>
    <property type="match status" value="1"/>
</dbReference>
<dbReference type="PANTHER" id="PTHR33692">
    <property type="entry name" value="RIBOSOME MATURATION FACTOR RIMM"/>
    <property type="match status" value="1"/>
</dbReference>
<dbReference type="PANTHER" id="PTHR33692:SF1">
    <property type="entry name" value="RIBOSOME MATURATION FACTOR RIMM"/>
    <property type="match status" value="1"/>
</dbReference>
<dbReference type="Pfam" id="PF05239">
    <property type="entry name" value="PRC"/>
    <property type="match status" value="1"/>
</dbReference>
<dbReference type="Pfam" id="PF01782">
    <property type="entry name" value="RimM"/>
    <property type="match status" value="1"/>
</dbReference>
<dbReference type="SUPFAM" id="SSF50346">
    <property type="entry name" value="PRC-barrel domain"/>
    <property type="match status" value="1"/>
</dbReference>
<dbReference type="SUPFAM" id="SSF50447">
    <property type="entry name" value="Translation proteins"/>
    <property type="match status" value="1"/>
</dbReference>
<feature type="chain" id="PRO_1000116587" description="Ribosome maturation factor RimM">
    <location>
        <begin position="1"/>
        <end position="176"/>
    </location>
</feature>
<feature type="domain" description="PRC barrel" evidence="1">
    <location>
        <begin position="103"/>
        <end position="176"/>
    </location>
</feature>
<proteinExistence type="inferred from homology"/>
<keyword id="KW-0143">Chaperone</keyword>
<keyword id="KW-0963">Cytoplasm</keyword>
<keyword id="KW-0690">Ribosome biogenesis</keyword>
<keyword id="KW-0698">rRNA processing</keyword>
<comment type="function">
    <text evidence="1">An accessory protein needed during the final step in the assembly of 30S ribosomal subunit, possibly for assembly of the head region. Essential for efficient processing of 16S rRNA. May be needed both before and after RbfA during the maturation of 16S rRNA. It has affinity for free ribosomal 30S subunits but not for 70S ribosomes.</text>
</comment>
<comment type="subunit">
    <text evidence="1">Binds ribosomal protein uS19.</text>
</comment>
<comment type="subcellular location">
    <subcellularLocation>
        <location evidence="1">Cytoplasm</location>
    </subcellularLocation>
</comment>
<comment type="domain">
    <text evidence="1">The PRC barrel domain binds ribosomal protein uS19.</text>
</comment>
<comment type="similarity">
    <text evidence="1">Belongs to the RimM family.</text>
</comment>
<accession>B9K8P4</accession>